<keyword id="KW-0687">Ribonucleoprotein</keyword>
<keyword id="KW-0689">Ribosomal protein</keyword>
<feature type="chain" id="PRO_0000243375" description="Large ribosomal subunit protein bL12">
    <location>
        <begin position="1"/>
        <end position="128"/>
    </location>
</feature>
<gene>
    <name evidence="1" type="primary">rplL</name>
    <name evidence="1" type="synonym">rpl12</name>
    <name type="ordered locus">Ava_2555</name>
</gene>
<organism>
    <name type="scientific">Trichormus variabilis (strain ATCC 29413 / PCC 7937)</name>
    <name type="common">Anabaena variabilis</name>
    <dbReference type="NCBI Taxonomy" id="240292"/>
    <lineage>
        <taxon>Bacteria</taxon>
        <taxon>Bacillati</taxon>
        <taxon>Cyanobacteriota</taxon>
        <taxon>Cyanophyceae</taxon>
        <taxon>Nostocales</taxon>
        <taxon>Nostocaceae</taxon>
        <taxon>Trichormus</taxon>
    </lineage>
</organism>
<name>RL7_TRIV2</name>
<evidence type="ECO:0000255" key="1">
    <source>
        <dbReference type="HAMAP-Rule" id="MF_00368"/>
    </source>
</evidence>
<evidence type="ECO:0000305" key="2"/>
<accession>Q3MA16</accession>
<protein>
    <recommendedName>
        <fullName evidence="1">Large ribosomal subunit protein bL12</fullName>
    </recommendedName>
    <alternativeName>
        <fullName evidence="2">50S ribosomal protein L7/L12</fullName>
    </alternativeName>
</protein>
<reference key="1">
    <citation type="journal article" date="2014" name="Stand. Genomic Sci.">
        <title>Complete genome sequence of Anabaena variabilis ATCC 29413.</title>
        <authorList>
            <person name="Thiel T."/>
            <person name="Pratte B.S."/>
            <person name="Zhong J."/>
            <person name="Goodwin L."/>
            <person name="Copeland A."/>
            <person name="Lucas S."/>
            <person name="Han C."/>
            <person name="Pitluck S."/>
            <person name="Land M.L."/>
            <person name="Kyrpides N.C."/>
            <person name="Woyke T."/>
        </authorList>
    </citation>
    <scope>NUCLEOTIDE SEQUENCE [LARGE SCALE GENOMIC DNA]</scope>
    <source>
        <strain>ATCC 29413 / PCC 7937</strain>
    </source>
</reference>
<dbReference type="EMBL" id="CP000117">
    <property type="protein sequence ID" value="ABA22170.1"/>
    <property type="molecule type" value="Genomic_DNA"/>
</dbReference>
<dbReference type="SMR" id="Q3MA16"/>
<dbReference type="STRING" id="240292.Ava_2555"/>
<dbReference type="KEGG" id="ava:Ava_2555"/>
<dbReference type="eggNOG" id="COG0222">
    <property type="taxonomic scope" value="Bacteria"/>
</dbReference>
<dbReference type="HOGENOM" id="CLU_086499_3_0_3"/>
<dbReference type="Proteomes" id="UP000002533">
    <property type="component" value="Chromosome"/>
</dbReference>
<dbReference type="GO" id="GO:0022625">
    <property type="term" value="C:cytosolic large ribosomal subunit"/>
    <property type="evidence" value="ECO:0007669"/>
    <property type="project" value="TreeGrafter"/>
</dbReference>
<dbReference type="GO" id="GO:0003729">
    <property type="term" value="F:mRNA binding"/>
    <property type="evidence" value="ECO:0007669"/>
    <property type="project" value="TreeGrafter"/>
</dbReference>
<dbReference type="GO" id="GO:0003735">
    <property type="term" value="F:structural constituent of ribosome"/>
    <property type="evidence" value="ECO:0007669"/>
    <property type="project" value="InterPro"/>
</dbReference>
<dbReference type="GO" id="GO:0006412">
    <property type="term" value="P:translation"/>
    <property type="evidence" value="ECO:0007669"/>
    <property type="project" value="UniProtKB-UniRule"/>
</dbReference>
<dbReference type="CDD" id="cd00387">
    <property type="entry name" value="Ribosomal_L7_L12"/>
    <property type="match status" value="1"/>
</dbReference>
<dbReference type="FunFam" id="3.30.1390.10:FF:000001">
    <property type="entry name" value="50S ribosomal protein L7/L12"/>
    <property type="match status" value="1"/>
</dbReference>
<dbReference type="Gene3D" id="3.30.1390.10">
    <property type="match status" value="1"/>
</dbReference>
<dbReference type="Gene3D" id="1.20.5.710">
    <property type="entry name" value="Single helix bin"/>
    <property type="match status" value="1"/>
</dbReference>
<dbReference type="HAMAP" id="MF_00368">
    <property type="entry name" value="Ribosomal_bL12"/>
    <property type="match status" value="1"/>
</dbReference>
<dbReference type="InterPro" id="IPR000206">
    <property type="entry name" value="Ribosomal_bL12"/>
</dbReference>
<dbReference type="InterPro" id="IPR013823">
    <property type="entry name" value="Ribosomal_bL12_C"/>
</dbReference>
<dbReference type="InterPro" id="IPR014719">
    <property type="entry name" value="Ribosomal_bL12_C/ClpS-like"/>
</dbReference>
<dbReference type="InterPro" id="IPR008932">
    <property type="entry name" value="Ribosomal_bL12_oligo"/>
</dbReference>
<dbReference type="InterPro" id="IPR036235">
    <property type="entry name" value="Ribosomal_bL12_oligo_N_sf"/>
</dbReference>
<dbReference type="NCBIfam" id="TIGR00855">
    <property type="entry name" value="L12"/>
    <property type="match status" value="1"/>
</dbReference>
<dbReference type="PANTHER" id="PTHR45987">
    <property type="entry name" value="39S RIBOSOMAL PROTEIN L12"/>
    <property type="match status" value="1"/>
</dbReference>
<dbReference type="PANTHER" id="PTHR45987:SF4">
    <property type="entry name" value="LARGE RIBOSOMAL SUBUNIT PROTEIN BL12M"/>
    <property type="match status" value="1"/>
</dbReference>
<dbReference type="Pfam" id="PF00542">
    <property type="entry name" value="Ribosomal_L12"/>
    <property type="match status" value="1"/>
</dbReference>
<dbReference type="Pfam" id="PF16320">
    <property type="entry name" value="Ribosomal_L12_N"/>
    <property type="match status" value="1"/>
</dbReference>
<dbReference type="SUPFAM" id="SSF54736">
    <property type="entry name" value="ClpS-like"/>
    <property type="match status" value="1"/>
</dbReference>
<dbReference type="SUPFAM" id="SSF48300">
    <property type="entry name" value="Ribosomal protein L7/12, oligomerisation (N-terminal) domain"/>
    <property type="match status" value="1"/>
</dbReference>
<comment type="function">
    <text evidence="1">Forms part of the ribosomal stalk which helps the ribosome interact with GTP-bound translation factors. Is thus essential for accurate translation.</text>
</comment>
<comment type="subunit">
    <text evidence="1">Homodimer. Part of the ribosomal stalk of the 50S ribosomal subunit. Forms a multimeric L10(L12)X complex, where L10 forms an elongated spine to which 2 to 4 L12 dimers bind in a sequential fashion. Binds GTP-bound translation factors.</text>
</comment>
<comment type="similarity">
    <text evidence="1">Belongs to the bacterial ribosomal protein bL12 family.</text>
</comment>
<sequence>MSAATDQILDQLKSLSLLEAAELVKQIEEAFGVSAAAPVGVAVAAPAAAAAAEPVEEQTEFDVILESVPADKKIAVLKIVREITGLGLKEAKDLVEAAPKAVKEAIAKDAAEDAKKRIEEAGGKVTIK</sequence>
<proteinExistence type="inferred from homology"/>